<name>SYV_MYCTU</name>
<comment type="function">
    <text evidence="1">Catalyzes the attachment of valine to tRNA(Val). As ValRS can inadvertently accommodate and process structurally similar amino acids such as threonine, to avoid such errors, it has a 'posttransfer' editing activity that hydrolyzes mischarged Thr-tRNA(Val) in a tRNA-dependent manner.</text>
</comment>
<comment type="catalytic activity">
    <reaction evidence="1">
        <text>tRNA(Val) + L-valine + ATP = L-valyl-tRNA(Val) + AMP + diphosphate</text>
        <dbReference type="Rhea" id="RHEA:10704"/>
        <dbReference type="Rhea" id="RHEA-COMP:9672"/>
        <dbReference type="Rhea" id="RHEA-COMP:9708"/>
        <dbReference type="ChEBI" id="CHEBI:30616"/>
        <dbReference type="ChEBI" id="CHEBI:33019"/>
        <dbReference type="ChEBI" id="CHEBI:57762"/>
        <dbReference type="ChEBI" id="CHEBI:78442"/>
        <dbReference type="ChEBI" id="CHEBI:78537"/>
        <dbReference type="ChEBI" id="CHEBI:456215"/>
        <dbReference type="EC" id="6.1.1.9"/>
    </reaction>
</comment>
<comment type="subunit">
    <text evidence="1">Monomer.</text>
</comment>
<comment type="subcellular location">
    <subcellularLocation>
        <location evidence="1">Cytoplasm</location>
    </subcellularLocation>
</comment>
<comment type="domain">
    <text evidence="1">ValRS has two distinct active sites: one for aminoacylation and one for editing. The misactivated threonine is translocated from the active site to the editing site.</text>
</comment>
<comment type="domain">
    <text evidence="1">The C-terminal coiled-coil domain is crucial for aminoacylation activity.</text>
</comment>
<comment type="similarity">
    <text evidence="1">Belongs to the class-I aminoacyl-tRNA synthetase family. ValS type 1 subfamily.</text>
</comment>
<comment type="sequence caution" evidence="2">
    <conflict type="erroneous initiation">
        <sequence resource="EMBL-CDS" id="CCP45241"/>
    </conflict>
    <text>Truncated N-terminus.</text>
</comment>
<accession>P9WFS9</accession>
<accession>L0T9U7</accession>
<accession>O53175</accession>
<accession>P67599</accession>
<dbReference type="EC" id="6.1.1.9" evidence="1"/>
<dbReference type="EMBL" id="AL123456">
    <property type="protein sequence ID" value="CCP45241.1"/>
    <property type="status" value="ALT_INIT"/>
    <property type="molecule type" value="Genomic_DNA"/>
</dbReference>
<dbReference type="PIR" id="G70863">
    <property type="entry name" value="G70863"/>
</dbReference>
<dbReference type="RefSeq" id="NP_216964.1">
    <property type="nucleotide sequence ID" value="NC_000962.3"/>
</dbReference>
<dbReference type="RefSeq" id="WP_003412604.1">
    <property type="nucleotide sequence ID" value="NZ_NVQJ01000024.1"/>
</dbReference>
<dbReference type="RefSeq" id="WP_003899325.1">
    <property type="nucleotide sequence ID" value="NC_000962.3"/>
</dbReference>
<dbReference type="SMR" id="P9WFS9"/>
<dbReference type="FunCoup" id="P9WFS9">
    <property type="interactions" value="471"/>
</dbReference>
<dbReference type="STRING" id="83332.Rv2448c"/>
<dbReference type="PaxDb" id="83332-Rv2448c"/>
<dbReference type="GeneID" id="885892"/>
<dbReference type="KEGG" id="mtu:Rv2448c"/>
<dbReference type="PATRIC" id="fig|83332.12.peg.2744"/>
<dbReference type="TubercuList" id="Rv2448c"/>
<dbReference type="eggNOG" id="COG0525">
    <property type="taxonomic scope" value="Bacteria"/>
</dbReference>
<dbReference type="InParanoid" id="P9WFS9"/>
<dbReference type="OrthoDB" id="9810365at2"/>
<dbReference type="Proteomes" id="UP000001584">
    <property type="component" value="Chromosome"/>
</dbReference>
<dbReference type="GO" id="GO:0005829">
    <property type="term" value="C:cytosol"/>
    <property type="evidence" value="ECO:0007005"/>
    <property type="project" value="MTBBASE"/>
</dbReference>
<dbReference type="GO" id="GO:0009274">
    <property type="term" value="C:peptidoglycan-based cell wall"/>
    <property type="evidence" value="ECO:0007005"/>
    <property type="project" value="MTBBASE"/>
</dbReference>
<dbReference type="GO" id="GO:0005886">
    <property type="term" value="C:plasma membrane"/>
    <property type="evidence" value="ECO:0007005"/>
    <property type="project" value="MTBBASE"/>
</dbReference>
<dbReference type="GO" id="GO:0002161">
    <property type="term" value="F:aminoacyl-tRNA deacylase activity"/>
    <property type="evidence" value="ECO:0007669"/>
    <property type="project" value="InterPro"/>
</dbReference>
<dbReference type="GO" id="GO:0005524">
    <property type="term" value="F:ATP binding"/>
    <property type="evidence" value="ECO:0007669"/>
    <property type="project" value="UniProtKB-UniRule"/>
</dbReference>
<dbReference type="GO" id="GO:0004832">
    <property type="term" value="F:valine-tRNA ligase activity"/>
    <property type="evidence" value="ECO:0000318"/>
    <property type="project" value="GO_Central"/>
</dbReference>
<dbReference type="GO" id="GO:0006438">
    <property type="term" value="P:valyl-tRNA aminoacylation"/>
    <property type="evidence" value="ECO:0000318"/>
    <property type="project" value="GO_Central"/>
</dbReference>
<dbReference type="CDD" id="cd07962">
    <property type="entry name" value="Anticodon_Ia_Val"/>
    <property type="match status" value="1"/>
</dbReference>
<dbReference type="CDD" id="cd00817">
    <property type="entry name" value="ValRS_core"/>
    <property type="match status" value="1"/>
</dbReference>
<dbReference type="FunFam" id="1.10.287.380:FF:000001">
    <property type="entry name" value="Valine--tRNA ligase"/>
    <property type="match status" value="1"/>
</dbReference>
<dbReference type="FunFam" id="1.10.730.10:FF:000027">
    <property type="entry name" value="Valine--tRNA ligase"/>
    <property type="match status" value="1"/>
</dbReference>
<dbReference type="FunFam" id="3.40.50.620:FF:000098">
    <property type="entry name" value="Valine--tRNA ligase"/>
    <property type="match status" value="1"/>
</dbReference>
<dbReference type="FunFam" id="3.40.50.620:FF:000129">
    <property type="entry name" value="Valine--tRNA ligase"/>
    <property type="match status" value="1"/>
</dbReference>
<dbReference type="FunFam" id="3.90.740.10:FF:000005">
    <property type="entry name" value="Valine--tRNA ligase, mitochondrial"/>
    <property type="match status" value="1"/>
</dbReference>
<dbReference type="Gene3D" id="3.40.50.620">
    <property type="entry name" value="HUPs"/>
    <property type="match status" value="2"/>
</dbReference>
<dbReference type="Gene3D" id="1.10.730.10">
    <property type="entry name" value="Isoleucyl-tRNA Synthetase, Domain 1"/>
    <property type="match status" value="1"/>
</dbReference>
<dbReference type="Gene3D" id="1.10.287.380">
    <property type="entry name" value="Valyl-tRNA synthetase, C-terminal domain"/>
    <property type="match status" value="1"/>
</dbReference>
<dbReference type="Gene3D" id="3.90.740.10">
    <property type="entry name" value="Valyl/Leucyl/Isoleucyl-tRNA synthetase, editing domain"/>
    <property type="match status" value="1"/>
</dbReference>
<dbReference type="HAMAP" id="MF_02004">
    <property type="entry name" value="Val_tRNA_synth_type1"/>
    <property type="match status" value="1"/>
</dbReference>
<dbReference type="InterPro" id="IPR001412">
    <property type="entry name" value="aa-tRNA-synth_I_CS"/>
</dbReference>
<dbReference type="InterPro" id="IPR002300">
    <property type="entry name" value="aa-tRNA-synth_Ia"/>
</dbReference>
<dbReference type="InterPro" id="IPR033705">
    <property type="entry name" value="Anticodon_Ia_Val"/>
</dbReference>
<dbReference type="InterPro" id="IPR013155">
    <property type="entry name" value="M/V/L/I-tRNA-synth_anticd-bd"/>
</dbReference>
<dbReference type="InterPro" id="IPR014729">
    <property type="entry name" value="Rossmann-like_a/b/a_fold"/>
</dbReference>
<dbReference type="InterPro" id="IPR010978">
    <property type="entry name" value="tRNA-bd_arm"/>
</dbReference>
<dbReference type="InterPro" id="IPR009080">
    <property type="entry name" value="tRNAsynth_Ia_anticodon-bd"/>
</dbReference>
<dbReference type="InterPro" id="IPR037118">
    <property type="entry name" value="Val-tRNA_synth_C_sf"/>
</dbReference>
<dbReference type="InterPro" id="IPR019499">
    <property type="entry name" value="Val-tRNA_synth_tRNA-bd"/>
</dbReference>
<dbReference type="InterPro" id="IPR009008">
    <property type="entry name" value="Val/Leu/Ile-tRNA-synth_edit"/>
</dbReference>
<dbReference type="InterPro" id="IPR002303">
    <property type="entry name" value="Valyl-tRNA_ligase"/>
</dbReference>
<dbReference type="NCBIfam" id="NF004349">
    <property type="entry name" value="PRK05729.1"/>
    <property type="match status" value="1"/>
</dbReference>
<dbReference type="NCBIfam" id="TIGR00422">
    <property type="entry name" value="valS"/>
    <property type="match status" value="1"/>
</dbReference>
<dbReference type="PANTHER" id="PTHR11946:SF93">
    <property type="entry name" value="VALINE--TRNA LIGASE, CHLOROPLASTIC_MITOCHONDRIAL 2"/>
    <property type="match status" value="1"/>
</dbReference>
<dbReference type="PANTHER" id="PTHR11946">
    <property type="entry name" value="VALYL-TRNA SYNTHETASES"/>
    <property type="match status" value="1"/>
</dbReference>
<dbReference type="Pfam" id="PF08264">
    <property type="entry name" value="Anticodon_1"/>
    <property type="match status" value="1"/>
</dbReference>
<dbReference type="Pfam" id="PF00133">
    <property type="entry name" value="tRNA-synt_1"/>
    <property type="match status" value="2"/>
</dbReference>
<dbReference type="Pfam" id="PF10458">
    <property type="entry name" value="Val_tRNA-synt_C"/>
    <property type="match status" value="1"/>
</dbReference>
<dbReference type="PRINTS" id="PR00986">
    <property type="entry name" value="TRNASYNTHVAL"/>
</dbReference>
<dbReference type="SUPFAM" id="SSF47323">
    <property type="entry name" value="Anticodon-binding domain of a subclass of class I aminoacyl-tRNA synthetases"/>
    <property type="match status" value="1"/>
</dbReference>
<dbReference type="SUPFAM" id="SSF52374">
    <property type="entry name" value="Nucleotidylyl transferase"/>
    <property type="match status" value="1"/>
</dbReference>
<dbReference type="SUPFAM" id="SSF46589">
    <property type="entry name" value="tRNA-binding arm"/>
    <property type="match status" value="1"/>
</dbReference>
<dbReference type="SUPFAM" id="SSF50677">
    <property type="entry name" value="ValRS/IleRS/LeuRS editing domain"/>
    <property type="match status" value="1"/>
</dbReference>
<dbReference type="PROSITE" id="PS00178">
    <property type="entry name" value="AA_TRNA_LIGASE_I"/>
    <property type="match status" value="1"/>
</dbReference>
<protein>
    <recommendedName>
        <fullName evidence="1">Valine--tRNA ligase</fullName>
        <ecNumber evidence="1">6.1.1.9</ecNumber>
    </recommendedName>
    <alternativeName>
        <fullName evidence="1">Valyl-tRNA synthetase</fullName>
        <shortName evidence="1">ValRS</shortName>
    </alternativeName>
</protein>
<feature type="initiator methionine" description="Removed" evidence="2">
    <location>
        <position position="1"/>
    </location>
</feature>
<feature type="chain" id="PRO_0000106232" description="Valine--tRNA ligase">
    <location>
        <begin position="2"/>
        <end position="886"/>
    </location>
</feature>
<feature type="coiled-coil region" evidence="1">
    <location>
        <begin position="819"/>
        <end position="851"/>
    </location>
</feature>
<feature type="short sequence motif" description="'HIGH' region">
    <location>
        <begin position="53"/>
        <end position="63"/>
    </location>
</feature>
<feature type="short sequence motif" description="'KMSKS' region">
    <location>
        <begin position="540"/>
        <end position="544"/>
    </location>
</feature>
<feature type="binding site" evidence="1">
    <location>
        <position position="543"/>
    </location>
    <ligand>
        <name>ATP</name>
        <dbReference type="ChEBI" id="CHEBI:30616"/>
    </ligand>
</feature>
<keyword id="KW-0030">Aminoacyl-tRNA synthetase</keyword>
<keyword id="KW-0067">ATP-binding</keyword>
<keyword id="KW-0175">Coiled coil</keyword>
<keyword id="KW-0963">Cytoplasm</keyword>
<keyword id="KW-0903">Direct protein sequencing</keyword>
<keyword id="KW-0436">Ligase</keyword>
<keyword id="KW-0547">Nucleotide-binding</keyword>
<keyword id="KW-0648">Protein biosynthesis</keyword>
<keyword id="KW-1185">Reference proteome</keyword>
<evidence type="ECO:0000255" key="1">
    <source>
        <dbReference type="HAMAP-Rule" id="MF_02004"/>
    </source>
</evidence>
<evidence type="ECO:0000269" key="2">
    <source>
    </source>
</evidence>
<organism>
    <name type="scientific">Mycobacterium tuberculosis (strain ATCC 25618 / H37Rv)</name>
    <dbReference type="NCBI Taxonomy" id="83332"/>
    <lineage>
        <taxon>Bacteria</taxon>
        <taxon>Bacillati</taxon>
        <taxon>Actinomycetota</taxon>
        <taxon>Actinomycetes</taxon>
        <taxon>Mycobacteriales</taxon>
        <taxon>Mycobacteriaceae</taxon>
        <taxon>Mycobacterium</taxon>
        <taxon>Mycobacterium tuberculosis complex</taxon>
    </lineage>
</organism>
<proteinExistence type="evidence at protein level"/>
<gene>
    <name evidence="1" type="primary">valS</name>
    <name type="ordered locus">Rv2448c</name>
    <name type="ORF">MTV008.04c</name>
</gene>
<sequence length="886" mass="98800">MTASPHPAADMLPKSWDPAAMESAIYQKWLDAGYFTADPTSTKPAYSIVLPPPNVTGSLHMGHALEHTMMDALTRRKRMQGYEVLWQPGTDHAGIATQSVVEQQLAVDGKTKEDLGRELFVDKVWDWKRESGGAIGGQMRRLGDGVDWSRDRFTMDEGLSRAVRTIFKRLYDAGLIYRAERLVNWSPVLQTAISDLEVNYRDVEGELVSFRYGSLDDSQPHIVVATTRVETMLGDTAIAVHPDDERYRHLVGTSLAHPFVDRELAIVADEHVDPEFGTGAVKVTPAHDPNDFEIGVRHQLPMPSILDTKGRIVDTGTRFDGMDRFEARVAVRQALAAQGRVVEEKRPYLHSVGHSERSGEPIEPRLSLQWWVRVESLAKAAGDAVRNGDTVIHPASMEPRWFSWVDDMHDWCISRQLWWGHRIPIWYGPDGEQVCVGPDETPPQGWEQDPDVLDTWFSSALWPFSTLGWPDKTAELEKFYPTSVLVTGYDILFFWVARMMMFGTFVGDDAAITLDGRRGPQVPFTDVFLHGLIRDESGRKMSKSKGNVIDPLDWVEMFGADALRFTLARGASPGGDLAVSEDAVRASRNFGTKLFNATRYALLNGAAPAPLPSPNELTDADRWILGRLEEVRAEVDSAFDGYEFSRACESLYHFAWDEFCDWYLELAKTQLAQGLTHTTAVLAAGLDTLLRLLHPVIPFLTEALWLALTGRESLVSADWPEPSGISVDLVAAQRINDMQKLVTEVRRFRSDQGLADRQKVPARMHGVRDSDLSNQVAAVTSLAWLTEPGPDFEPSVSLEVRLGPEMNRTVVVELDTSGTIDVAAERRRLEKELAGAQKELASTAAKLANADFLAKAPDAVIAKIRDRQRVAQQETERITTRLAALQ</sequence>
<reference key="1">
    <citation type="journal article" date="1998" name="Nature">
        <title>Deciphering the biology of Mycobacterium tuberculosis from the complete genome sequence.</title>
        <authorList>
            <person name="Cole S.T."/>
            <person name="Brosch R."/>
            <person name="Parkhill J."/>
            <person name="Garnier T."/>
            <person name="Churcher C.M."/>
            <person name="Harris D.E."/>
            <person name="Gordon S.V."/>
            <person name="Eiglmeier K."/>
            <person name="Gas S."/>
            <person name="Barry C.E. III"/>
            <person name="Tekaia F."/>
            <person name="Badcock K."/>
            <person name="Basham D."/>
            <person name="Brown D."/>
            <person name="Chillingworth T."/>
            <person name="Connor R."/>
            <person name="Davies R.M."/>
            <person name="Devlin K."/>
            <person name="Feltwell T."/>
            <person name="Gentles S."/>
            <person name="Hamlin N."/>
            <person name="Holroyd S."/>
            <person name="Hornsby T."/>
            <person name="Jagels K."/>
            <person name="Krogh A."/>
            <person name="McLean J."/>
            <person name="Moule S."/>
            <person name="Murphy L.D."/>
            <person name="Oliver S."/>
            <person name="Osborne J."/>
            <person name="Quail M.A."/>
            <person name="Rajandream M.A."/>
            <person name="Rogers J."/>
            <person name="Rutter S."/>
            <person name="Seeger K."/>
            <person name="Skelton S."/>
            <person name="Squares S."/>
            <person name="Squares R."/>
            <person name="Sulston J.E."/>
            <person name="Taylor K."/>
            <person name="Whitehead S."/>
            <person name="Barrell B.G."/>
        </authorList>
    </citation>
    <scope>NUCLEOTIDE SEQUENCE [LARGE SCALE GENOMIC DNA]</scope>
    <source>
        <strain>ATCC 25618 / H37Rv</strain>
    </source>
</reference>
<reference key="2">
    <citation type="journal article" date="2022" name="Genomics">
        <title>Deep N-terminomics of Mycobacterium tuberculosis H37Rv extensively correct annotated encoding genes.</title>
        <authorList>
            <person name="Shi J."/>
            <person name="Meng S."/>
            <person name="Wan L."/>
            <person name="Zhang Z."/>
            <person name="Jiang S."/>
            <person name="Zhu H."/>
            <person name="Dai E."/>
            <person name="Chang L."/>
            <person name="Gao H."/>
            <person name="Wan K."/>
            <person name="Zhang L."/>
            <person name="Zhao X."/>
            <person name="Liu H."/>
            <person name="Lyu Z."/>
            <person name="Zhang Y."/>
            <person name="Xu P."/>
        </authorList>
    </citation>
    <scope>PROTEIN SEQUENCE OF 2-14</scope>
    <scope>SEQUENCE REVISION TO N-TERMINUS</scope>
    <source>
        <strain>H37Rv</strain>
    </source>
</reference>
<reference key="3">
    <citation type="journal article" date="2011" name="Mol. Cell. Proteomics">
        <title>Proteogenomic analysis of Mycobacterium tuberculosis by high resolution mass spectrometry.</title>
        <authorList>
            <person name="Kelkar D.S."/>
            <person name="Kumar D."/>
            <person name="Kumar P."/>
            <person name="Balakrishnan L."/>
            <person name="Muthusamy B."/>
            <person name="Yadav A.K."/>
            <person name="Shrivastava P."/>
            <person name="Marimuthu A."/>
            <person name="Anand S."/>
            <person name="Sundaram H."/>
            <person name="Kingsbury R."/>
            <person name="Harsha H.C."/>
            <person name="Nair B."/>
            <person name="Prasad T.S."/>
            <person name="Chauhan D.S."/>
            <person name="Katoch K."/>
            <person name="Katoch V.M."/>
            <person name="Kumar P."/>
            <person name="Chaerkady R."/>
            <person name="Ramachandran S."/>
            <person name="Dash D."/>
            <person name="Pandey A."/>
        </authorList>
    </citation>
    <scope>IDENTIFICATION BY MASS SPECTROMETRY [LARGE SCALE ANALYSIS]</scope>
    <source>
        <strain>ATCC 25618 / H37Rv</strain>
    </source>
</reference>